<keyword id="KW-0963">Cytoplasm</keyword>
<keyword id="KW-0597">Phosphoprotein</keyword>
<keyword id="KW-1185">Reference proteome</keyword>
<keyword id="KW-0677">Repeat</keyword>
<keyword id="KW-0802">TPR repeat</keyword>
<sequence length="1450" mass="161078">MALETDAKNSNAVAPGDAATVATTKAKENNSSAGKKQQQQQQPNQNQNLVNGNGNAADGPAAKKKGKKNRNKSPPEPAAEPVEASLSNGHAEKTTSEEGGDTAAPDTNANVGEKSEDGGGAAPGSELETEDIDLDALHEVGITVNISSPGADILSVQLSSMELVQEIHQLLMDREETCHRTCFSLQLDNVTLDNFAELKTIEQLEQGSTIRVVEEPYTMREARIHVRHVRDLLKNLDPADAYNGIDCTSLTYLNTITQGDLLDKKKTRPDSVDCTPPEYVTPGVSEPPLLPLHPNIKNAKGPQALKVLTTSAWNPPPGPRKLHGDLMYLYVVTMEDKRFHISACSKGFYINQSTDDTFNPKPDNPSHLSHSLIDLLSHISPSFRRAFQTIQKRRTTRHAFERVATPYQVYQWASPVLEHTVDAIRAEDAFSSKLGYEEHIPGQTRDWNEELQTTRELPRKTLPERLLRERAIFKVHGDFVTAATRGAMAVIDGNVLAINPGEDAKMQMFIWNNIFFSLGFDVRDHYKELGGDAAAFVAPRYDLHGVRVYNAVDVEGLYTLGTVVIDYRGYRVTAQSIIPGILEREQEQSVVYGSIDFGKTVLSHPKYLDLLRQAGKHLKILPHAVLNERDEPVELCSSVECKGIIGNDGRHYILDLLRTFPPDVNFLKLPEVQLSKELVDMGFPIEHRHKLCCLRQELLEAFIEDRYVSFIRIAAVHLQQLNAKKQSEKTEEKALPALEEAEKESSETKEAEAEKPVEKKEEEKQQPSSNETKTAEAMVNAIREAQSNVATSNEVQAAEVVKRACAAVGSLKEKEFDFRFNPDVFSNGIRHVDGEEGTCSSLAKQKVLVQDAAEFLVVKQIPAFIKEHLAHSSPPIDGQSLTESLHSHGINVRYLGKVIKLLAQMPRMDYLHRIAVLELIVRATKHIYYTYMQNTEPLHLSAAISHFLNCLLTTGPVNPAVSSEEAHKKRSNGNKHNKHKSKGNKQQASGNQNGSSAGSSSGGSSSSSDWTLVTPRSLWQQIRREAKSYWDWELDCDSIETAVSKYGILRISLLRAFCLKVGIQVLLREYNFESKHKPTFGDEDIVNVFPVVKHISPRATDAYNFYTTGQAKIQQGMFKEGYELISEALNLLNNVFGAMHQENGSCLRMLARLSYLLGDAQDALAIQQRAVIMSERVNGIDHPSTILEYTHLSLYSFANGHVGMSLKLLYRARYLMVLICGEDHPEVALIDSNISLILHALGEYELSLRFIEHALKLNIKYFGSKAMHVAFSYHLMARTQSCMGDFRSALNNEKETYSIYKSQVGEKHEKTRDSAECLRLLTQQAVLLQRKMNDIYSNGKLTSDLPPIHITPPSMGSVLDMLNTINGILFVQISQKDIVKVRSEIEKHFKANSAENEVNDAIKSIVAAANNNGDTEAETKDATKDNKDLAGASTQLTNGDKDAETAVASS</sequence>
<name>CLU_DROAN</name>
<accession>B3MIW0</accession>
<gene>
    <name evidence="2" type="primary">clu</name>
    <name type="ORF">GF12179</name>
</gene>
<evidence type="ECO:0000250" key="1"/>
<evidence type="ECO:0000255" key="2">
    <source>
        <dbReference type="HAMAP-Rule" id="MF_03013"/>
    </source>
</evidence>
<evidence type="ECO:0000255" key="3">
    <source>
        <dbReference type="PROSITE-ProRule" id="PRU01167"/>
    </source>
</evidence>
<evidence type="ECO:0000256" key="4">
    <source>
        <dbReference type="SAM" id="MobiDB-lite"/>
    </source>
</evidence>
<reference key="1">
    <citation type="journal article" date="2007" name="Nature">
        <title>Evolution of genes and genomes on the Drosophila phylogeny.</title>
        <authorList>
            <consortium name="Drosophila 12 genomes consortium"/>
        </authorList>
    </citation>
    <scope>NUCLEOTIDE SEQUENCE [LARGE SCALE GENOMIC DNA]</scope>
    <source>
        <strain>Tucson 14024-0371.13</strain>
    </source>
</reference>
<proteinExistence type="inferred from homology"/>
<comment type="function">
    <text evidence="2">mRNA-binding protein involved in proper cytoplasmic distribution of mitochondria.</text>
</comment>
<comment type="subcellular location">
    <subcellularLocation>
        <location evidence="2">Cytoplasm</location>
    </subcellularLocation>
</comment>
<comment type="similarity">
    <text evidence="2">Belongs to the CLU family.</text>
</comment>
<organism>
    <name type="scientific">Drosophila ananassae</name>
    <name type="common">Fruit fly</name>
    <dbReference type="NCBI Taxonomy" id="7217"/>
    <lineage>
        <taxon>Eukaryota</taxon>
        <taxon>Metazoa</taxon>
        <taxon>Ecdysozoa</taxon>
        <taxon>Arthropoda</taxon>
        <taxon>Hexapoda</taxon>
        <taxon>Insecta</taxon>
        <taxon>Pterygota</taxon>
        <taxon>Neoptera</taxon>
        <taxon>Endopterygota</taxon>
        <taxon>Diptera</taxon>
        <taxon>Brachycera</taxon>
        <taxon>Muscomorpha</taxon>
        <taxon>Ephydroidea</taxon>
        <taxon>Drosophilidae</taxon>
        <taxon>Drosophila</taxon>
        <taxon>Sophophora</taxon>
    </lineage>
</organism>
<dbReference type="EMBL" id="CH902619">
    <property type="protein sequence ID" value="EDV36020.1"/>
    <property type="molecule type" value="Genomic_DNA"/>
</dbReference>
<dbReference type="SMR" id="B3MIW0"/>
<dbReference type="FunCoup" id="B3MIW0">
    <property type="interactions" value="1708"/>
</dbReference>
<dbReference type="STRING" id="7217.B3MIW0"/>
<dbReference type="EnsemblMetazoa" id="FBtr0116879">
    <property type="protein sequence ID" value="FBpp0115371"/>
    <property type="gene ID" value="FBgn0089218"/>
</dbReference>
<dbReference type="EnsemblMetazoa" id="XM_001959162.4">
    <property type="protein sequence ID" value="XP_001959198.1"/>
    <property type="gene ID" value="LOC6495035"/>
</dbReference>
<dbReference type="GeneID" id="6495035"/>
<dbReference type="KEGG" id="dan:6495035"/>
<dbReference type="CTD" id="1191"/>
<dbReference type="eggNOG" id="KOG1839">
    <property type="taxonomic scope" value="Eukaryota"/>
</dbReference>
<dbReference type="HOGENOM" id="CLU_003256_1_0_1"/>
<dbReference type="InParanoid" id="B3MIW0"/>
<dbReference type="OMA" id="HPVWDKD"/>
<dbReference type="OrthoDB" id="1414216at2759"/>
<dbReference type="PhylomeDB" id="B3MIW0"/>
<dbReference type="Proteomes" id="UP000007801">
    <property type="component" value="Unassembled WGS sequence"/>
</dbReference>
<dbReference type="GO" id="GO:0005829">
    <property type="term" value="C:cytosol"/>
    <property type="evidence" value="ECO:0007669"/>
    <property type="project" value="EnsemblMetazoa"/>
</dbReference>
<dbReference type="GO" id="GO:0003729">
    <property type="term" value="F:mRNA binding"/>
    <property type="evidence" value="ECO:0007669"/>
    <property type="project" value="EnsemblMetazoa"/>
</dbReference>
<dbReference type="GO" id="GO:0043022">
    <property type="term" value="F:ribosome binding"/>
    <property type="evidence" value="ECO:0007669"/>
    <property type="project" value="EnsemblMetazoa"/>
</dbReference>
<dbReference type="GO" id="GO:0055059">
    <property type="term" value="P:asymmetric neuroblast division"/>
    <property type="evidence" value="ECO:0007669"/>
    <property type="project" value="EnsemblMetazoa"/>
</dbReference>
<dbReference type="GO" id="GO:0048312">
    <property type="term" value="P:intracellular distribution of mitochondria"/>
    <property type="evidence" value="ECO:0007669"/>
    <property type="project" value="TreeGrafter"/>
</dbReference>
<dbReference type="GO" id="GO:0007005">
    <property type="term" value="P:mitochondrion organization"/>
    <property type="evidence" value="ECO:0007669"/>
    <property type="project" value="UniProtKB-UniRule"/>
</dbReference>
<dbReference type="GO" id="GO:0033750">
    <property type="term" value="P:ribosome localization"/>
    <property type="evidence" value="ECO:0007669"/>
    <property type="project" value="EnsemblMetazoa"/>
</dbReference>
<dbReference type="CDD" id="cd15466">
    <property type="entry name" value="CLU-central"/>
    <property type="match status" value="1"/>
</dbReference>
<dbReference type="FunFam" id="3.30.2280.10:FF:000001">
    <property type="entry name" value="Clustered mitochondria (CluA/CLU1) homolog"/>
    <property type="match status" value="1"/>
</dbReference>
<dbReference type="FunFam" id="1.25.40.10:FF:000099">
    <property type="entry name" value="Clustered mitochondria protein homolog"/>
    <property type="match status" value="1"/>
</dbReference>
<dbReference type="Gene3D" id="3.30.2280.10">
    <property type="entry name" value="Hypothetical protein (hspc210)"/>
    <property type="match status" value="1"/>
</dbReference>
<dbReference type="Gene3D" id="1.25.40.10">
    <property type="entry name" value="Tetratricopeptide repeat domain"/>
    <property type="match status" value="1"/>
</dbReference>
<dbReference type="HAMAP" id="MF_03013">
    <property type="entry name" value="CLU"/>
    <property type="match status" value="1"/>
</dbReference>
<dbReference type="InterPro" id="IPR033646">
    <property type="entry name" value="CLU-central"/>
</dbReference>
<dbReference type="InterPro" id="IPR025697">
    <property type="entry name" value="CLU_dom"/>
</dbReference>
<dbReference type="InterPro" id="IPR028275">
    <property type="entry name" value="CLU_N"/>
</dbReference>
<dbReference type="InterPro" id="IPR027523">
    <property type="entry name" value="CLU_prot"/>
</dbReference>
<dbReference type="InterPro" id="IPR007967">
    <property type="entry name" value="GSKIP_dom"/>
</dbReference>
<dbReference type="InterPro" id="IPR023231">
    <property type="entry name" value="GSKIP_dom_sf"/>
</dbReference>
<dbReference type="InterPro" id="IPR011990">
    <property type="entry name" value="TPR-like_helical_dom_sf"/>
</dbReference>
<dbReference type="PANTHER" id="PTHR12601:SF6">
    <property type="entry name" value="CLUSTERED MITOCHONDRIA PROTEIN HOMOLOG"/>
    <property type="match status" value="1"/>
</dbReference>
<dbReference type="PANTHER" id="PTHR12601">
    <property type="entry name" value="EUKARYOTIC TRANSLATION INITIATION FACTOR 3 SUBUNIT EIF-3"/>
    <property type="match status" value="1"/>
</dbReference>
<dbReference type="Pfam" id="PF13236">
    <property type="entry name" value="CLU"/>
    <property type="match status" value="1"/>
</dbReference>
<dbReference type="Pfam" id="PF15044">
    <property type="entry name" value="CLU_N"/>
    <property type="match status" value="1"/>
</dbReference>
<dbReference type="Pfam" id="PF12807">
    <property type="entry name" value="eIF3_p135"/>
    <property type="match status" value="1"/>
</dbReference>
<dbReference type="Pfam" id="PF05303">
    <property type="entry name" value="GSKIP_dom"/>
    <property type="match status" value="1"/>
</dbReference>
<dbReference type="Pfam" id="PF13374">
    <property type="entry name" value="TPR_10"/>
    <property type="match status" value="1"/>
</dbReference>
<dbReference type="Pfam" id="PF13424">
    <property type="entry name" value="TPR_12"/>
    <property type="match status" value="1"/>
</dbReference>
<dbReference type="SUPFAM" id="SSF103107">
    <property type="entry name" value="Hypothetical protein c14orf129, hspc210"/>
    <property type="match status" value="1"/>
</dbReference>
<dbReference type="SUPFAM" id="SSF48452">
    <property type="entry name" value="TPR-like"/>
    <property type="match status" value="2"/>
</dbReference>
<dbReference type="PROSITE" id="PS51823">
    <property type="entry name" value="CLU"/>
    <property type="match status" value="1"/>
</dbReference>
<protein>
    <recommendedName>
        <fullName evidence="2">Protein clueless</fullName>
    </recommendedName>
    <alternativeName>
        <fullName evidence="2">Clustered mitochondria protein homolog</fullName>
    </alternativeName>
</protein>
<feature type="chain" id="PRO_0000366379" description="Protein clueless">
    <location>
        <begin position="1"/>
        <end position="1450"/>
    </location>
</feature>
<feature type="domain" description="Clu" evidence="3">
    <location>
        <begin position="425"/>
        <end position="667"/>
    </location>
</feature>
<feature type="repeat" description="TPR 1">
    <location>
        <begin position="1102"/>
        <end position="1135"/>
    </location>
</feature>
<feature type="repeat" description="TPR 2">
    <location>
        <begin position="1228"/>
        <end position="1261"/>
    </location>
</feature>
<feature type="repeat" description="TPR 3">
    <location>
        <begin position="1263"/>
        <end position="1296"/>
    </location>
</feature>
<feature type="region of interest" description="Disordered" evidence="4">
    <location>
        <begin position="1"/>
        <end position="126"/>
    </location>
</feature>
<feature type="region of interest" description="Disordered" evidence="4">
    <location>
        <begin position="266"/>
        <end position="287"/>
    </location>
</feature>
<feature type="region of interest" description="Disordered" evidence="4">
    <location>
        <begin position="725"/>
        <end position="775"/>
    </location>
</feature>
<feature type="region of interest" description="Disordered" evidence="4">
    <location>
        <begin position="959"/>
        <end position="1011"/>
    </location>
</feature>
<feature type="region of interest" description="Disordered" evidence="4">
    <location>
        <begin position="1410"/>
        <end position="1450"/>
    </location>
</feature>
<feature type="compositionally biased region" description="Low complexity" evidence="4">
    <location>
        <begin position="29"/>
        <end position="60"/>
    </location>
</feature>
<feature type="compositionally biased region" description="Basic residues" evidence="4">
    <location>
        <begin position="62"/>
        <end position="71"/>
    </location>
</feature>
<feature type="compositionally biased region" description="Basic and acidic residues" evidence="4">
    <location>
        <begin position="725"/>
        <end position="734"/>
    </location>
</feature>
<feature type="compositionally biased region" description="Basic and acidic residues" evidence="4">
    <location>
        <begin position="743"/>
        <end position="765"/>
    </location>
</feature>
<feature type="compositionally biased region" description="Basic residues" evidence="4">
    <location>
        <begin position="968"/>
        <end position="983"/>
    </location>
</feature>
<feature type="compositionally biased region" description="Low complexity" evidence="4">
    <location>
        <begin position="984"/>
        <end position="1008"/>
    </location>
</feature>
<feature type="compositionally biased region" description="Basic and acidic residues" evidence="4">
    <location>
        <begin position="1417"/>
        <end position="1428"/>
    </location>
</feature>
<feature type="modified residue" description="Phosphoserine" evidence="1">
    <location>
        <position position="271"/>
    </location>
</feature>